<name>RNC_CAMJD</name>
<organism>
    <name type="scientific">Campylobacter jejuni subsp. doylei (strain ATCC BAA-1458 / RM4099 / 269.97)</name>
    <dbReference type="NCBI Taxonomy" id="360109"/>
    <lineage>
        <taxon>Bacteria</taxon>
        <taxon>Pseudomonadati</taxon>
        <taxon>Campylobacterota</taxon>
        <taxon>Epsilonproteobacteria</taxon>
        <taxon>Campylobacterales</taxon>
        <taxon>Campylobacteraceae</taxon>
        <taxon>Campylobacter</taxon>
    </lineage>
</organism>
<dbReference type="EC" id="3.1.26.3" evidence="1"/>
<dbReference type="EMBL" id="CP000768">
    <property type="protein sequence ID" value="ABS43920.1"/>
    <property type="molecule type" value="Genomic_DNA"/>
</dbReference>
<dbReference type="SMR" id="A7H5Y2"/>
<dbReference type="KEGG" id="cjd:JJD26997_1995"/>
<dbReference type="HOGENOM" id="CLU_000907_1_3_7"/>
<dbReference type="Proteomes" id="UP000002302">
    <property type="component" value="Chromosome"/>
</dbReference>
<dbReference type="GO" id="GO:0005737">
    <property type="term" value="C:cytoplasm"/>
    <property type="evidence" value="ECO:0007669"/>
    <property type="project" value="UniProtKB-SubCell"/>
</dbReference>
<dbReference type="GO" id="GO:0003725">
    <property type="term" value="F:double-stranded RNA binding"/>
    <property type="evidence" value="ECO:0007669"/>
    <property type="project" value="TreeGrafter"/>
</dbReference>
<dbReference type="GO" id="GO:0046872">
    <property type="term" value="F:metal ion binding"/>
    <property type="evidence" value="ECO:0007669"/>
    <property type="project" value="UniProtKB-KW"/>
</dbReference>
<dbReference type="GO" id="GO:0004525">
    <property type="term" value="F:ribonuclease III activity"/>
    <property type="evidence" value="ECO:0007669"/>
    <property type="project" value="UniProtKB-UniRule"/>
</dbReference>
<dbReference type="GO" id="GO:0019843">
    <property type="term" value="F:rRNA binding"/>
    <property type="evidence" value="ECO:0007669"/>
    <property type="project" value="UniProtKB-KW"/>
</dbReference>
<dbReference type="GO" id="GO:0006397">
    <property type="term" value="P:mRNA processing"/>
    <property type="evidence" value="ECO:0007669"/>
    <property type="project" value="UniProtKB-UniRule"/>
</dbReference>
<dbReference type="GO" id="GO:0010468">
    <property type="term" value="P:regulation of gene expression"/>
    <property type="evidence" value="ECO:0007669"/>
    <property type="project" value="TreeGrafter"/>
</dbReference>
<dbReference type="GO" id="GO:0006364">
    <property type="term" value="P:rRNA processing"/>
    <property type="evidence" value="ECO:0007669"/>
    <property type="project" value="UniProtKB-UniRule"/>
</dbReference>
<dbReference type="GO" id="GO:0008033">
    <property type="term" value="P:tRNA processing"/>
    <property type="evidence" value="ECO:0007669"/>
    <property type="project" value="UniProtKB-KW"/>
</dbReference>
<dbReference type="CDD" id="cd10845">
    <property type="entry name" value="DSRM_RNAse_III_family"/>
    <property type="match status" value="1"/>
</dbReference>
<dbReference type="CDD" id="cd00593">
    <property type="entry name" value="RIBOc"/>
    <property type="match status" value="1"/>
</dbReference>
<dbReference type="FunFam" id="1.10.1520.10:FF:000001">
    <property type="entry name" value="Ribonuclease 3"/>
    <property type="match status" value="1"/>
</dbReference>
<dbReference type="Gene3D" id="3.30.160.20">
    <property type="match status" value="1"/>
</dbReference>
<dbReference type="Gene3D" id="1.10.1520.10">
    <property type="entry name" value="Ribonuclease III domain"/>
    <property type="match status" value="1"/>
</dbReference>
<dbReference type="HAMAP" id="MF_00104">
    <property type="entry name" value="RNase_III"/>
    <property type="match status" value="1"/>
</dbReference>
<dbReference type="InterPro" id="IPR014720">
    <property type="entry name" value="dsRBD_dom"/>
</dbReference>
<dbReference type="InterPro" id="IPR011907">
    <property type="entry name" value="RNase_III"/>
</dbReference>
<dbReference type="InterPro" id="IPR000999">
    <property type="entry name" value="RNase_III_dom"/>
</dbReference>
<dbReference type="InterPro" id="IPR036389">
    <property type="entry name" value="RNase_III_sf"/>
</dbReference>
<dbReference type="NCBIfam" id="TIGR02191">
    <property type="entry name" value="RNaseIII"/>
    <property type="match status" value="1"/>
</dbReference>
<dbReference type="PANTHER" id="PTHR11207:SF0">
    <property type="entry name" value="RIBONUCLEASE 3"/>
    <property type="match status" value="1"/>
</dbReference>
<dbReference type="PANTHER" id="PTHR11207">
    <property type="entry name" value="RIBONUCLEASE III"/>
    <property type="match status" value="1"/>
</dbReference>
<dbReference type="Pfam" id="PF00035">
    <property type="entry name" value="dsrm"/>
    <property type="match status" value="1"/>
</dbReference>
<dbReference type="Pfam" id="PF14622">
    <property type="entry name" value="Ribonucleas_3_3"/>
    <property type="match status" value="1"/>
</dbReference>
<dbReference type="SMART" id="SM00358">
    <property type="entry name" value="DSRM"/>
    <property type="match status" value="1"/>
</dbReference>
<dbReference type="SMART" id="SM00535">
    <property type="entry name" value="RIBOc"/>
    <property type="match status" value="1"/>
</dbReference>
<dbReference type="SUPFAM" id="SSF54768">
    <property type="entry name" value="dsRNA-binding domain-like"/>
    <property type="match status" value="1"/>
</dbReference>
<dbReference type="SUPFAM" id="SSF69065">
    <property type="entry name" value="RNase III domain-like"/>
    <property type="match status" value="1"/>
</dbReference>
<dbReference type="PROSITE" id="PS50137">
    <property type="entry name" value="DS_RBD"/>
    <property type="match status" value="1"/>
</dbReference>
<dbReference type="PROSITE" id="PS00517">
    <property type="entry name" value="RNASE_3_1"/>
    <property type="match status" value="1"/>
</dbReference>
<dbReference type="PROSITE" id="PS50142">
    <property type="entry name" value="RNASE_3_2"/>
    <property type="match status" value="1"/>
</dbReference>
<evidence type="ECO:0000255" key="1">
    <source>
        <dbReference type="HAMAP-Rule" id="MF_00104"/>
    </source>
</evidence>
<accession>A7H5Y2</accession>
<proteinExistence type="inferred from homology"/>
<gene>
    <name evidence="1" type="primary">rnc</name>
    <name type="ordered locus">JJD26997_1995</name>
</gene>
<protein>
    <recommendedName>
        <fullName evidence="1">Ribonuclease 3</fullName>
        <ecNumber evidence="1">3.1.26.3</ecNumber>
    </recommendedName>
    <alternativeName>
        <fullName evidence="1">Ribonuclease III</fullName>
        <shortName evidence="1">RNase III</shortName>
    </alternativeName>
</protein>
<keyword id="KW-0963">Cytoplasm</keyword>
<keyword id="KW-0255">Endonuclease</keyword>
<keyword id="KW-0378">Hydrolase</keyword>
<keyword id="KW-0460">Magnesium</keyword>
<keyword id="KW-0479">Metal-binding</keyword>
<keyword id="KW-0507">mRNA processing</keyword>
<keyword id="KW-0540">Nuclease</keyword>
<keyword id="KW-0694">RNA-binding</keyword>
<keyword id="KW-0698">rRNA processing</keyword>
<keyword id="KW-0699">rRNA-binding</keyword>
<keyword id="KW-0819">tRNA processing</keyword>
<sequence length="225" mass="25190">MKNIEKLEQSLTYEFKDKNLLIHALTHKSFKKSYNNERLEFLGDAVLDLVVGEYLFHKFTKDAEGDLSKLRAALVNEKSFAKIANSLNLGDFIFMSVAEENNGGKEKPSILSDALEAIIGAIHLEAGFEFAKTIALRLMEKNFPQIDAKILIKDYKTKLQEITQGKIGQTPQYETVRAFGPDHLKQFEIALMLDGKELARAIAGSKKEAQQMAAKIALEKLGSLQ</sequence>
<reference key="1">
    <citation type="submission" date="2007-07" db="EMBL/GenBank/DDBJ databases">
        <title>Complete genome sequence of Campylobacter jejuni subsp doylei 269.97 isolated from human blood.</title>
        <authorList>
            <person name="Fouts D.E."/>
            <person name="Mongodin E.F."/>
            <person name="Puiu D."/>
            <person name="Sebastian Y."/>
            <person name="Miller W.G."/>
            <person name="Mandrell R.E."/>
            <person name="Lastovica A.J."/>
            <person name="Nelson K.E."/>
        </authorList>
    </citation>
    <scope>NUCLEOTIDE SEQUENCE [LARGE SCALE GENOMIC DNA]</scope>
    <source>
        <strain>ATCC BAA-1458 / RM4099 / 269.97</strain>
    </source>
</reference>
<comment type="function">
    <text evidence="1">Digests double-stranded RNA. Involved in the processing of primary rRNA transcript to yield the immediate precursors to the large and small rRNAs (23S and 16S). Processes some mRNAs, and tRNAs when they are encoded in the rRNA operon. Processes pre-crRNA and tracrRNA of type II CRISPR loci if present in the organism.</text>
</comment>
<comment type="catalytic activity">
    <reaction evidence="1">
        <text>Endonucleolytic cleavage to 5'-phosphomonoester.</text>
        <dbReference type="EC" id="3.1.26.3"/>
    </reaction>
</comment>
<comment type="cofactor">
    <cofactor evidence="1">
        <name>Mg(2+)</name>
        <dbReference type="ChEBI" id="CHEBI:18420"/>
    </cofactor>
</comment>
<comment type="subunit">
    <text evidence="1">Homodimer.</text>
</comment>
<comment type="subcellular location">
    <subcellularLocation>
        <location evidence="1">Cytoplasm</location>
    </subcellularLocation>
</comment>
<comment type="similarity">
    <text evidence="1">Belongs to the ribonuclease III family.</text>
</comment>
<feature type="chain" id="PRO_1000075736" description="Ribonuclease 3">
    <location>
        <begin position="1"/>
        <end position="225"/>
    </location>
</feature>
<feature type="domain" description="RNase III" evidence="1">
    <location>
        <begin position="4"/>
        <end position="127"/>
    </location>
</feature>
<feature type="domain" description="DRBM" evidence="1">
    <location>
        <begin position="154"/>
        <end position="223"/>
    </location>
</feature>
<feature type="active site" evidence="1">
    <location>
        <position position="44"/>
    </location>
</feature>
<feature type="active site" evidence="1">
    <location>
        <position position="116"/>
    </location>
</feature>
<feature type="binding site" evidence="1">
    <location>
        <position position="40"/>
    </location>
    <ligand>
        <name>Mg(2+)</name>
        <dbReference type="ChEBI" id="CHEBI:18420"/>
    </ligand>
</feature>
<feature type="binding site" evidence="1">
    <location>
        <position position="113"/>
    </location>
    <ligand>
        <name>Mg(2+)</name>
        <dbReference type="ChEBI" id="CHEBI:18420"/>
    </ligand>
</feature>
<feature type="binding site" evidence="1">
    <location>
        <position position="116"/>
    </location>
    <ligand>
        <name>Mg(2+)</name>
        <dbReference type="ChEBI" id="CHEBI:18420"/>
    </ligand>
</feature>